<accession>Q741M7</accession>
<dbReference type="EC" id="6.1.1.23" evidence="1"/>
<dbReference type="EMBL" id="AE016958">
    <property type="protein sequence ID" value="AAS03380.1"/>
    <property type="molecule type" value="Genomic_DNA"/>
</dbReference>
<dbReference type="RefSeq" id="WP_003872660.1">
    <property type="nucleotide sequence ID" value="NZ_CP106873.1"/>
</dbReference>
<dbReference type="SMR" id="Q741M7"/>
<dbReference type="STRING" id="262316.MAP_1063"/>
<dbReference type="KEGG" id="mpa:MAP_1063"/>
<dbReference type="eggNOG" id="COG0173">
    <property type="taxonomic scope" value="Bacteria"/>
</dbReference>
<dbReference type="HOGENOM" id="CLU_014330_3_2_11"/>
<dbReference type="Proteomes" id="UP000000580">
    <property type="component" value="Chromosome"/>
</dbReference>
<dbReference type="GO" id="GO:0005737">
    <property type="term" value="C:cytoplasm"/>
    <property type="evidence" value="ECO:0007669"/>
    <property type="project" value="UniProtKB-SubCell"/>
</dbReference>
<dbReference type="GO" id="GO:0004815">
    <property type="term" value="F:aspartate-tRNA ligase activity"/>
    <property type="evidence" value="ECO:0007669"/>
    <property type="project" value="UniProtKB-UniRule"/>
</dbReference>
<dbReference type="GO" id="GO:0050560">
    <property type="term" value="F:aspartate-tRNA(Asn) ligase activity"/>
    <property type="evidence" value="ECO:0007669"/>
    <property type="project" value="UniProtKB-EC"/>
</dbReference>
<dbReference type="GO" id="GO:0005524">
    <property type="term" value="F:ATP binding"/>
    <property type="evidence" value="ECO:0007669"/>
    <property type="project" value="UniProtKB-UniRule"/>
</dbReference>
<dbReference type="GO" id="GO:0003676">
    <property type="term" value="F:nucleic acid binding"/>
    <property type="evidence" value="ECO:0007669"/>
    <property type="project" value="InterPro"/>
</dbReference>
<dbReference type="GO" id="GO:0006422">
    <property type="term" value="P:aspartyl-tRNA aminoacylation"/>
    <property type="evidence" value="ECO:0007669"/>
    <property type="project" value="UniProtKB-UniRule"/>
</dbReference>
<dbReference type="CDD" id="cd00777">
    <property type="entry name" value="AspRS_core"/>
    <property type="match status" value="1"/>
</dbReference>
<dbReference type="CDD" id="cd04317">
    <property type="entry name" value="EcAspRS_like_N"/>
    <property type="match status" value="1"/>
</dbReference>
<dbReference type="Gene3D" id="3.30.930.10">
    <property type="entry name" value="Bira Bifunctional Protein, Domain 2"/>
    <property type="match status" value="1"/>
</dbReference>
<dbReference type="Gene3D" id="3.30.1360.30">
    <property type="entry name" value="GAD-like domain"/>
    <property type="match status" value="1"/>
</dbReference>
<dbReference type="Gene3D" id="2.40.50.140">
    <property type="entry name" value="Nucleic acid-binding proteins"/>
    <property type="match status" value="1"/>
</dbReference>
<dbReference type="HAMAP" id="MF_00044">
    <property type="entry name" value="Asp_tRNA_synth_type1"/>
    <property type="match status" value="1"/>
</dbReference>
<dbReference type="InterPro" id="IPR004364">
    <property type="entry name" value="Aa-tRNA-synt_II"/>
</dbReference>
<dbReference type="InterPro" id="IPR006195">
    <property type="entry name" value="aa-tRNA-synth_II"/>
</dbReference>
<dbReference type="InterPro" id="IPR045864">
    <property type="entry name" value="aa-tRNA-synth_II/BPL/LPL"/>
</dbReference>
<dbReference type="InterPro" id="IPR004524">
    <property type="entry name" value="Asp-tRNA-ligase_1"/>
</dbReference>
<dbReference type="InterPro" id="IPR047089">
    <property type="entry name" value="Asp-tRNA-ligase_1_N"/>
</dbReference>
<dbReference type="InterPro" id="IPR002312">
    <property type="entry name" value="Asp/Asn-tRNA-synth_IIb"/>
</dbReference>
<dbReference type="InterPro" id="IPR047090">
    <property type="entry name" value="AspRS_core"/>
</dbReference>
<dbReference type="InterPro" id="IPR004115">
    <property type="entry name" value="GAD-like_sf"/>
</dbReference>
<dbReference type="InterPro" id="IPR029351">
    <property type="entry name" value="GAD_dom"/>
</dbReference>
<dbReference type="InterPro" id="IPR012340">
    <property type="entry name" value="NA-bd_OB-fold"/>
</dbReference>
<dbReference type="InterPro" id="IPR004365">
    <property type="entry name" value="NA-bd_OB_tRNA"/>
</dbReference>
<dbReference type="NCBIfam" id="TIGR00459">
    <property type="entry name" value="aspS_bact"/>
    <property type="match status" value="1"/>
</dbReference>
<dbReference type="NCBIfam" id="NF001750">
    <property type="entry name" value="PRK00476.1"/>
    <property type="match status" value="1"/>
</dbReference>
<dbReference type="PANTHER" id="PTHR22594:SF5">
    <property type="entry name" value="ASPARTATE--TRNA LIGASE, MITOCHONDRIAL"/>
    <property type="match status" value="1"/>
</dbReference>
<dbReference type="PANTHER" id="PTHR22594">
    <property type="entry name" value="ASPARTYL/LYSYL-TRNA SYNTHETASE"/>
    <property type="match status" value="1"/>
</dbReference>
<dbReference type="Pfam" id="PF02938">
    <property type="entry name" value="GAD"/>
    <property type="match status" value="1"/>
</dbReference>
<dbReference type="Pfam" id="PF00152">
    <property type="entry name" value="tRNA-synt_2"/>
    <property type="match status" value="1"/>
</dbReference>
<dbReference type="Pfam" id="PF01336">
    <property type="entry name" value="tRNA_anti-codon"/>
    <property type="match status" value="1"/>
</dbReference>
<dbReference type="PRINTS" id="PR01042">
    <property type="entry name" value="TRNASYNTHASP"/>
</dbReference>
<dbReference type="SUPFAM" id="SSF55681">
    <property type="entry name" value="Class II aaRS and biotin synthetases"/>
    <property type="match status" value="1"/>
</dbReference>
<dbReference type="SUPFAM" id="SSF55261">
    <property type="entry name" value="GAD domain-like"/>
    <property type="match status" value="1"/>
</dbReference>
<dbReference type="SUPFAM" id="SSF50249">
    <property type="entry name" value="Nucleic acid-binding proteins"/>
    <property type="match status" value="1"/>
</dbReference>
<dbReference type="PROSITE" id="PS50862">
    <property type="entry name" value="AA_TRNA_LIGASE_II"/>
    <property type="match status" value="1"/>
</dbReference>
<feature type="chain" id="PRO_0000110905" description="Aspartate--tRNA(Asp/Asn) ligase">
    <location>
        <begin position="1"/>
        <end position="591"/>
    </location>
</feature>
<feature type="region of interest" description="Aspartate" evidence="1">
    <location>
        <begin position="194"/>
        <end position="197"/>
    </location>
</feature>
<feature type="region of interest" description="Disordered" evidence="2">
    <location>
        <begin position="559"/>
        <end position="591"/>
    </location>
</feature>
<feature type="compositionally biased region" description="Basic and acidic residues" evidence="2">
    <location>
        <begin position="574"/>
        <end position="591"/>
    </location>
</feature>
<feature type="binding site" evidence="1">
    <location>
        <position position="170"/>
    </location>
    <ligand>
        <name>L-aspartate</name>
        <dbReference type="ChEBI" id="CHEBI:29991"/>
    </ligand>
</feature>
<feature type="binding site" evidence="1">
    <location>
        <begin position="216"/>
        <end position="218"/>
    </location>
    <ligand>
        <name>ATP</name>
        <dbReference type="ChEBI" id="CHEBI:30616"/>
    </ligand>
</feature>
<feature type="binding site" evidence="1">
    <location>
        <position position="216"/>
    </location>
    <ligand>
        <name>L-aspartate</name>
        <dbReference type="ChEBI" id="CHEBI:29991"/>
    </ligand>
</feature>
<feature type="binding site" evidence="1">
    <location>
        <position position="225"/>
    </location>
    <ligand>
        <name>ATP</name>
        <dbReference type="ChEBI" id="CHEBI:30616"/>
    </ligand>
</feature>
<feature type="binding site" evidence="1">
    <location>
        <position position="448"/>
    </location>
    <ligand>
        <name>L-aspartate</name>
        <dbReference type="ChEBI" id="CHEBI:29991"/>
    </ligand>
</feature>
<feature type="binding site" evidence="1">
    <location>
        <position position="482"/>
    </location>
    <ligand>
        <name>ATP</name>
        <dbReference type="ChEBI" id="CHEBI:30616"/>
    </ligand>
</feature>
<feature type="binding site" evidence="1">
    <location>
        <position position="489"/>
    </location>
    <ligand>
        <name>L-aspartate</name>
        <dbReference type="ChEBI" id="CHEBI:29991"/>
    </ligand>
</feature>
<feature type="binding site" evidence="1">
    <location>
        <begin position="534"/>
        <end position="537"/>
    </location>
    <ligand>
        <name>ATP</name>
        <dbReference type="ChEBI" id="CHEBI:30616"/>
    </ligand>
</feature>
<feature type="site" description="Important for tRNA non-discrimination" evidence="1">
    <location>
        <position position="31"/>
    </location>
</feature>
<feature type="site" description="Important for tRNA non-discrimination" evidence="1">
    <location>
        <position position="80"/>
    </location>
</feature>
<proteinExistence type="inferred from homology"/>
<evidence type="ECO:0000255" key="1">
    <source>
        <dbReference type="HAMAP-Rule" id="MF_00044"/>
    </source>
</evidence>
<evidence type="ECO:0000256" key="2">
    <source>
        <dbReference type="SAM" id="MobiDB-lite"/>
    </source>
</evidence>
<comment type="function">
    <text evidence="1">Aspartyl-tRNA synthetase with relaxed tRNA specificity since it is able to aspartylate not only its cognate tRNA(Asp) but also tRNA(Asn). Reaction proceeds in two steps: L-aspartate is first activated by ATP to form Asp-AMP and then transferred to the acceptor end of tRNA(Asp/Asn).</text>
</comment>
<comment type="catalytic activity">
    <reaction evidence="1">
        <text>tRNA(Asx) + L-aspartate + ATP = L-aspartyl-tRNA(Asx) + AMP + diphosphate</text>
        <dbReference type="Rhea" id="RHEA:18349"/>
        <dbReference type="Rhea" id="RHEA-COMP:9710"/>
        <dbReference type="Rhea" id="RHEA-COMP:9711"/>
        <dbReference type="ChEBI" id="CHEBI:29991"/>
        <dbReference type="ChEBI" id="CHEBI:30616"/>
        <dbReference type="ChEBI" id="CHEBI:33019"/>
        <dbReference type="ChEBI" id="CHEBI:78442"/>
        <dbReference type="ChEBI" id="CHEBI:78516"/>
        <dbReference type="ChEBI" id="CHEBI:456215"/>
        <dbReference type="EC" id="6.1.1.23"/>
    </reaction>
</comment>
<comment type="subunit">
    <text evidence="1">Homodimer.</text>
</comment>
<comment type="subcellular location">
    <subcellularLocation>
        <location evidence="1">Cytoplasm</location>
    </subcellularLocation>
</comment>
<comment type="similarity">
    <text evidence="1">Belongs to the class-II aminoacyl-tRNA synthetase family. Type 1 subfamily.</text>
</comment>
<name>SYDND_MYCPA</name>
<gene>
    <name evidence="1" type="primary">aspS</name>
    <name type="ordered locus">MAP_1063</name>
</gene>
<protein>
    <recommendedName>
        <fullName evidence="1">Aspartate--tRNA(Asp/Asn) ligase</fullName>
        <ecNumber evidence="1">6.1.1.23</ecNumber>
    </recommendedName>
    <alternativeName>
        <fullName evidence="1">Aspartyl-tRNA synthetase</fullName>
        <shortName evidence="1">AspRS</shortName>
    </alternativeName>
    <alternativeName>
        <fullName evidence="1">Non-discriminating aspartyl-tRNA synthetase</fullName>
        <shortName evidence="1">ND-AspRS</shortName>
    </alternativeName>
</protein>
<reference key="1">
    <citation type="journal article" date="2005" name="Proc. Natl. Acad. Sci. U.S.A.">
        <title>The complete genome sequence of Mycobacterium avium subspecies paratuberculosis.</title>
        <authorList>
            <person name="Li L."/>
            <person name="Bannantine J.P."/>
            <person name="Zhang Q."/>
            <person name="Amonsin A."/>
            <person name="May B.J."/>
            <person name="Alt D."/>
            <person name="Banerji N."/>
            <person name="Kanjilal S."/>
            <person name="Kapur V."/>
        </authorList>
    </citation>
    <scope>NUCLEOTIDE SEQUENCE [LARGE SCALE GENOMIC DNA]</scope>
    <source>
        <strain>ATCC BAA-968 / K-10</strain>
    </source>
</reference>
<sequence length="591" mass="64327">MLRSHAAGSLRSSDAGQQVTLAGWVARRRDHGGVIFIDLRDASGITQVVFRDPDVLKQAHRLRAEFCVAVTGLVEIRPEGNANPEIATGDIEVNASSLTVLGESAPLPFQLDEPAGEELRLKYRYLDLRRDAPASAIRLRSKVNAAAREVLDRHDFVEIETPTITRSTPEGARDFLVPARLHPGSFYALPQSPQLFKQLLMVAGMERYYQIARCYRDEDFRADRQPEFTQLDMEMSFVDAEDVIAISEEILAALWALIGYDIPRPIPRISYADAMARYGSDKPDLRFGLELVECSEFFKDTTFRVFQAPYVGAVVMPGGASQPRRTLDGWQEWAKQRGAKGLAYVLVGEDGELGGPVAKNLSEAERAGLAGHVGAAPGDCIFFAAGPAKPSRALLGAARSEIAHRLGLIDPQAWAFVWVVDPPLFEPADDATAAGDVAVGSGAWTAVHHAFTAPKPGYEDAIETDTGNVLADAYDIVCNGNEIGGGSIRIHRRDIQERVFAVMGLDHAEAQEKFGFLLEAFTFGAPPHGGIAFGWDRINALLSRVDSIREVIAFPKTGGGVDPLTDAPAPITEQQRKESGIDVKPEPSKPH</sequence>
<organism>
    <name type="scientific">Mycolicibacterium paratuberculosis (strain ATCC BAA-968 / K-10)</name>
    <name type="common">Mycobacterium paratuberculosis</name>
    <dbReference type="NCBI Taxonomy" id="262316"/>
    <lineage>
        <taxon>Bacteria</taxon>
        <taxon>Bacillati</taxon>
        <taxon>Actinomycetota</taxon>
        <taxon>Actinomycetes</taxon>
        <taxon>Mycobacteriales</taxon>
        <taxon>Mycobacteriaceae</taxon>
        <taxon>Mycobacterium</taxon>
        <taxon>Mycobacterium avium complex (MAC)</taxon>
    </lineage>
</organism>
<keyword id="KW-0030">Aminoacyl-tRNA synthetase</keyword>
<keyword id="KW-0067">ATP-binding</keyword>
<keyword id="KW-0963">Cytoplasm</keyword>
<keyword id="KW-0436">Ligase</keyword>
<keyword id="KW-0547">Nucleotide-binding</keyword>
<keyword id="KW-0648">Protein biosynthesis</keyword>
<keyword id="KW-1185">Reference proteome</keyword>